<organism>
    <name type="scientific">Dasyurus hallucatus</name>
    <name type="common">Northern quoll</name>
    <name type="synonym">Satanellus hallucatus</name>
    <dbReference type="NCBI Taxonomy" id="9280"/>
    <lineage>
        <taxon>Eukaryota</taxon>
        <taxon>Metazoa</taxon>
        <taxon>Chordata</taxon>
        <taxon>Craniata</taxon>
        <taxon>Vertebrata</taxon>
        <taxon>Euteleostomi</taxon>
        <taxon>Mammalia</taxon>
        <taxon>Metatheria</taxon>
        <taxon>Dasyuromorphia</taxon>
        <taxon>Dasyuridae</taxon>
        <taxon>Dasyurus</taxon>
    </lineage>
</organism>
<keyword id="KW-0158">Chromosome</keyword>
<keyword id="KW-0217">Developmental protein</keyword>
<keyword id="KW-0221">Differentiation</keyword>
<keyword id="KW-0226">DNA condensation</keyword>
<keyword id="KW-0238">DNA-binding</keyword>
<keyword id="KW-0544">Nucleosome core</keyword>
<keyword id="KW-0539">Nucleus</keyword>
<keyword id="KW-0744">Spermatogenesis</keyword>
<comment type="function">
    <text>Protamines substitute for histones in the chromatin of sperm during the haploid phase of spermatogenesis. They compact sperm DNA into a highly condensed, stable and inactive complex.</text>
</comment>
<comment type="subcellular location">
    <subcellularLocation>
        <location>Nucleus</location>
    </subcellularLocation>
    <subcellularLocation>
        <location>Chromosome</location>
    </subcellularLocation>
</comment>
<comment type="tissue specificity">
    <text>Testis.</text>
</comment>
<comment type="similarity">
    <text evidence="2">Belongs to the protamine P1 family.</text>
</comment>
<reference key="1">
    <citation type="journal article" date="1995" name="Proc. R. Soc. B">
        <title>Molecular phylogeny and evolution of marsupial protamine P1 genes.</title>
        <authorList>
            <person name="Retief J.D."/>
            <person name="Krajewski C."/>
            <person name="Westerman M."/>
            <person name="Winkfein R.J."/>
            <person name="Dixon G.H."/>
        </authorList>
    </citation>
    <scope>NUCLEOTIDE SEQUENCE [GENOMIC DNA]</scope>
    <source>
        <tissue>Sperm</tissue>
    </source>
</reference>
<evidence type="ECO:0000256" key="1">
    <source>
        <dbReference type="SAM" id="MobiDB-lite"/>
    </source>
</evidence>
<evidence type="ECO:0000305" key="2"/>
<proteinExistence type="evidence at transcript level"/>
<sequence length="61" mass="8378">MARYRRRSRSRSRSRYRRRRRRRSRGRRRRTYRRSRRHSRRRRGRRRGYSRRRYSRRGRRR</sequence>
<feature type="chain" id="PRO_0000191463" description="Sperm protamine P1">
    <location>
        <begin position="1"/>
        <end position="61"/>
    </location>
</feature>
<feature type="region of interest" description="Disordered" evidence="1">
    <location>
        <begin position="1"/>
        <end position="61"/>
    </location>
</feature>
<dbReference type="EMBL" id="L35341">
    <property type="protein sequence ID" value="AAA56795.1"/>
    <property type="molecule type" value="Genomic_DNA"/>
</dbReference>
<dbReference type="GO" id="GO:0000786">
    <property type="term" value="C:nucleosome"/>
    <property type="evidence" value="ECO:0007669"/>
    <property type="project" value="UniProtKB-KW"/>
</dbReference>
<dbReference type="GO" id="GO:0005634">
    <property type="term" value="C:nucleus"/>
    <property type="evidence" value="ECO:0007669"/>
    <property type="project" value="UniProtKB-SubCell"/>
</dbReference>
<dbReference type="GO" id="GO:0003677">
    <property type="term" value="F:DNA binding"/>
    <property type="evidence" value="ECO:0007669"/>
    <property type="project" value="UniProtKB-KW"/>
</dbReference>
<dbReference type="GO" id="GO:0030261">
    <property type="term" value="P:chromosome condensation"/>
    <property type="evidence" value="ECO:0007669"/>
    <property type="project" value="UniProtKB-KW"/>
</dbReference>
<dbReference type="GO" id="GO:0035092">
    <property type="term" value="P:sperm DNA condensation"/>
    <property type="evidence" value="ECO:0007669"/>
    <property type="project" value="InterPro"/>
</dbReference>
<dbReference type="InterPro" id="IPR000221">
    <property type="entry name" value="Protamine_P1"/>
</dbReference>
<dbReference type="PROSITE" id="PS00048">
    <property type="entry name" value="PROTAMINE_P1"/>
    <property type="match status" value="1"/>
</dbReference>
<gene>
    <name type="primary">PRM1</name>
</gene>
<accession>P67834</accession>
<accession>P42133</accession>
<accession>P42135</accession>
<name>HSP1_DASHA</name>
<protein>
    <recommendedName>
        <fullName>Sperm protamine P1</fullName>
    </recommendedName>
</protein>